<comment type="function">
    <text evidence="7">May play a role in cell adhesion.</text>
</comment>
<comment type="subcellular location">
    <subcellularLocation>
        <location evidence="4">Cell membrane</location>
        <topology evidence="1">Lipid-anchor</topology>
        <topology evidence="1">GPI-anchor</topology>
    </subcellularLocation>
</comment>
<comment type="developmental stage">
    <text evidence="4">Expressed in spores.</text>
</comment>
<organism evidence="9">
    <name type="scientific">Rhizopus delemar (strain RA 99-880 / ATCC MYA-4621 / FGSC 9543 / NRRL 43880)</name>
    <name type="common">Mucormycosis agent</name>
    <name type="synonym">Rhizopus arrhizus var. delemar</name>
    <dbReference type="NCBI Taxonomy" id="246409"/>
    <lineage>
        <taxon>Eukaryota</taxon>
        <taxon>Fungi</taxon>
        <taxon>Fungi incertae sedis</taxon>
        <taxon>Mucoromycota</taxon>
        <taxon>Mucoromycotina</taxon>
        <taxon>Mucoromycetes</taxon>
        <taxon>Mucorales</taxon>
        <taxon>Mucorineae</taxon>
        <taxon>Rhizopodaceae</taxon>
        <taxon>Rhizopus</taxon>
    </lineage>
</organism>
<proteinExistence type="evidence at transcript level"/>
<keyword id="KW-1003">Cell membrane</keyword>
<keyword id="KW-0325">Glycoprotein</keyword>
<keyword id="KW-0336">GPI-anchor</keyword>
<keyword id="KW-0449">Lipoprotein</keyword>
<keyword id="KW-0472">Membrane</keyword>
<keyword id="KW-1185">Reference proteome</keyword>
<keyword id="KW-0732">Signal</keyword>
<gene>
    <name evidence="5" type="primary">CotH1</name>
    <name evidence="8" type="ORF">RO3G_05018</name>
</gene>
<sequence>MKSLLFVVFIFLTTTYAAKVSFKVIAPDAKNRVHVNINGVLVELKASDPDVPYYTGFAELKHGQSYNYVVDGNAEPFKRLLNGSSTKNEFFNRPVTYATNIPELPSILTEGSWTRGDTSNPIWDSNYVPSIFVTGNPREMNELIENVKKNTYKTKITFIGPETINTFEGCTLGLHKPGRKHNDAKQSWIWALPEGQFMANRNWFKIRHMEEDPTQLREKLYADILRKMGTYANEANMVRFFINKEGMGIFNMLDDVIMYSYINAMFYHGDTPEQLGGLYDGASGASFNFPGDFDSFIPNVESPLDQDAIEPFSKAFTSIDFLEDEQVKTIGKYFDYDQFLRFMVMEFLTGDWDGYWQEQTNDGAYIDINDHNKIYYLGQDFDATFGVNLEQKREFVNVSYTEYPKLFPGGVLINRLLQNPGVKKTFENYLKITVQEIFNNATLGPYVTARHEFLAPDLQWDRSIKQRSPGNIFGWTFEQTYENLFEGVTAPGKNSGGADWGLLEWVAAKEKAVKSYLSSSEAADAATVTQVPEAPGTDGTPSESTAWPHANTRFRQAEASNTHKIGTSSPSNFIVKIKQGTVSSSSSIKRTPCILPLVILASTLFASFF</sequence>
<accession>I1BVT3</accession>
<protein>
    <recommendedName>
        <fullName evidence="5">Spore coat protein homolog 1</fullName>
    </recommendedName>
</protein>
<name>COTH1_RHIO9</name>
<evidence type="ECO:0000255" key="1"/>
<evidence type="ECO:0000255" key="2">
    <source>
        <dbReference type="PROSITE-ProRule" id="PRU00498"/>
    </source>
</evidence>
<evidence type="ECO:0000256" key="3">
    <source>
        <dbReference type="SAM" id="MobiDB-lite"/>
    </source>
</evidence>
<evidence type="ECO:0000269" key="4">
    <source>
    </source>
</evidence>
<evidence type="ECO:0000303" key="5">
    <source>
    </source>
</evidence>
<evidence type="ECO:0000305" key="6"/>
<evidence type="ECO:0000305" key="7">
    <source>
    </source>
</evidence>
<evidence type="ECO:0000312" key="8">
    <source>
        <dbReference type="EMBL" id="EIE80313.1"/>
    </source>
</evidence>
<evidence type="ECO:0000312" key="9">
    <source>
        <dbReference type="Proteomes" id="UP000009138"/>
    </source>
</evidence>
<dbReference type="EMBL" id="CH476734">
    <property type="protein sequence ID" value="EIE80313.1"/>
    <property type="molecule type" value="Genomic_DNA"/>
</dbReference>
<dbReference type="SMR" id="I1BVT3"/>
<dbReference type="STRING" id="246409.I1BVT3"/>
<dbReference type="GlyCosmos" id="I1BVT3">
    <property type="glycosylation" value="3 sites, No reported glycans"/>
</dbReference>
<dbReference type="VEuPathDB" id="FungiDB:RO3G_05018"/>
<dbReference type="eggNOG" id="ENOG502TA22">
    <property type="taxonomic scope" value="Eukaryota"/>
</dbReference>
<dbReference type="InParanoid" id="I1BVT3"/>
<dbReference type="OMA" id="SIENCVF"/>
<dbReference type="OrthoDB" id="25926at4827"/>
<dbReference type="Proteomes" id="UP000009138">
    <property type="component" value="Unassembled WGS sequence"/>
</dbReference>
<dbReference type="GO" id="GO:0005886">
    <property type="term" value="C:plasma membrane"/>
    <property type="evidence" value="ECO:0007669"/>
    <property type="project" value="UniProtKB-SubCell"/>
</dbReference>
<dbReference type="GO" id="GO:0098552">
    <property type="term" value="C:side of membrane"/>
    <property type="evidence" value="ECO:0007669"/>
    <property type="project" value="UniProtKB-KW"/>
</dbReference>
<dbReference type="Gene3D" id="2.60.40.10">
    <property type="entry name" value="Immunoglobulins"/>
    <property type="match status" value="1"/>
</dbReference>
<dbReference type="InterPro" id="IPR013783">
    <property type="entry name" value="Ig-like_fold"/>
</dbReference>
<dbReference type="InterPro" id="IPR014867">
    <property type="entry name" value="Spore_coat_CotH_CotH2/3/7"/>
</dbReference>
<dbReference type="Pfam" id="PF08757">
    <property type="entry name" value="CotH"/>
    <property type="match status" value="1"/>
</dbReference>
<feature type="signal peptide" evidence="1">
    <location>
        <begin position="1"/>
        <end position="17"/>
    </location>
</feature>
<feature type="chain" id="PRO_5003638187" description="Spore coat protein homolog 1" evidence="1">
    <location>
        <begin position="18"/>
        <end position="609"/>
    </location>
</feature>
<feature type="propeptide" id="PRO_0000453692" description="Removed in mature form" evidence="1">
    <location>
        <begin position="585"/>
        <end position="609"/>
    </location>
</feature>
<feature type="region of interest" description="Disordered" evidence="3">
    <location>
        <begin position="527"/>
        <end position="547"/>
    </location>
</feature>
<feature type="lipid moiety-binding region" description="GPI-anchor amidated serine" evidence="1">
    <location>
        <position position="584"/>
    </location>
</feature>
<feature type="glycosylation site" description="N-linked (GlcNAc...) asparagine" evidence="2">
    <location>
        <position position="82"/>
    </location>
</feature>
<feature type="glycosylation site" description="N-linked (GlcNAc...) asparagine" evidence="2">
    <location>
        <position position="397"/>
    </location>
</feature>
<feature type="glycosylation site" description="N-linked (GlcNAc...) asparagine" evidence="2">
    <location>
        <position position="440"/>
    </location>
</feature>
<reference evidence="9" key="1">
    <citation type="journal article" date="2009" name="PLoS Genet.">
        <title>Genomic analysis of the basal lineage fungus Rhizopus oryzae reveals a whole-genome duplication.</title>
        <authorList>
            <person name="Ma L.-J."/>
            <person name="Ibrahim A.S."/>
            <person name="Skory C."/>
            <person name="Grabherr M.G."/>
            <person name="Burger G."/>
            <person name="Butler M."/>
            <person name="Elias M."/>
            <person name="Idnurm A."/>
            <person name="Lang B.F."/>
            <person name="Sone T."/>
            <person name="Abe A."/>
            <person name="Calvo S.E."/>
            <person name="Corrochano L.M."/>
            <person name="Engels R."/>
            <person name="Fu J."/>
            <person name="Hansberg W."/>
            <person name="Kim J.-M."/>
            <person name="Kodira C.D."/>
            <person name="Koehrsen M.J."/>
            <person name="Liu B."/>
            <person name="Miranda-Saavedra D."/>
            <person name="O'Leary S."/>
            <person name="Ortiz-Castellanos L."/>
            <person name="Poulter R."/>
            <person name="Rodriguez-Romero J."/>
            <person name="Ruiz-Herrera J."/>
            <person name="Shen Y.-Q."/>
            <person name="Zeng Q."/>
            <person name="Galagan J."/>
            <person name="Birren B.W."/>
            <person name="Cuomo C.A."/>
            <person name="Wickes B.L."/>
        </authorList>
    </citation>
    <scope>NUCLEOTIDE SEQUENCE [LARGE SCALE GENOMIC DNA]</scope>
    <source>
        <strain evidence="9">RA 99-880 / ATCC MYA-4621 / FGSC 9543 / NRRL 43880</strain>
    </source>
</reference>
<reference evidence="6" key="2">
    <citation type="journal article" date="2014" name="J. Clin. Invest.">
        <title>CotH3 mediates fungal invasion of host cells during mucormycosis.</title>
        <authorList>
            <person name="Gebremariam T."/>
            <person name="Liu M."/>
            <person name="Luo G."/>
            <person name="Bruno V."/>
            <person name="Phan Q.T."/>
            <person name="Waring A.J."/>
            <person name="Edwards J.E. Jr."/>
            <person name="Filler S.G."/>
            <person name="Yeaman M.R."/>
            <person name="Ibrahim A.S."/>
        </authorList>
    </citation>
    <scope>FUNCTION</scope>
    <scope>SUBCELLULAR LOCATION</scope>
    <scope>DEVELOPMENTAL STAGE</scope>
</reference>